<accession>Q2TJ95</accession>
<accession>A6H6M4</accession>
<accession>Q3SYI9</accession>
<accession>Q5R2V4</accession>
<accession>Q8BVW2</accession>
<accession>Q9CSB2</accession>
<keyword id="KW-1015">Disulfide bond</keyword>
<keyword id="KW-0325">Glycoprotein</keyword>
<keyword id="KW-0358">Heparin-binding</keyword>
<keyword id="KW-1185">Reference proteome</keyword>
<keyword id="KW-0677">Repeat</keyword>
<keyword id="KW-0964">Secreted</keyword>
<keyword id="KW-0716">Sensory transduction</keyword>
<keyword id="KW-0732">Signal</keyword>
<keyword id="KW-0879">Wnt signaling pathway</keyword>
<evidence type="ECO:0000250" key="1">
    <source>
        <dbReference type="UniProtKB" id="Q9BXY4"/>
    </source>
</evidence>
<evidence type="ECO:0000255" key="2"/>
<evidence type="ECO:0000255" key="3">
    <source>
        <dbReference type="PROSITE-ProRule" id="PRU00210"/>
    </source>
</evidence>
<evidence type="ECO:0000256" key="4">
    <source>
        <dbReference type="SAM" id="MobiDB-lite"/>
    </source>
</evidence>
<evidence type="ECO:0000269" key="5">
    <source>
    </source>
</evidence>
<evidence type="ECO:0000269" key="6">
    <source>
    </source>
</evidence>
<evidence type="ECO:0000269" key="7">
    <source>
    </source>
</evidence>
<evidence type="ECO:0000269" key="8">
    <source>
    </source>
</evidence>
<evidence type="ECO:0000303" key="9">
    <source>
    </source>
</evidence>
<evidence type="ECO:0000303" key="10">
    <source ref="2"/>
</evidence>
<evidence type="ECO:0000305" key="11"/>
<protein>
    <recommendedName>
        <fullName>R-spondin-3</fullName>
    </recommendedName>
    <alternativeName>
        <fullName>Cabriolet</fullName>
    </alternativeName>
    <alternativeName>
        <fullName evidence="9">Cysteine-rich and single thrombospondin domain-containing protein 1</fullName>
        <shortName evidence="9">Cristin-1</shortName>
    </alternativeName>
    <alternativeName>
        <fullName evidence="10">Nucleopondin</fullName>
    </alternativeName>
    <alternativeName>
        <fullName>Roof plate-specific spondin-3</fullName>
    </alternativeName>
</protein>
<comment type="function">
    <text evidence="1 6 7 8">Activator of the canonical Wnt signaling pathway by acting as a ligand for LGR4-6 receptors, which acts as a key regulator of angiogenesis (PubMed:16543246, PubMed:21693646, PubMed:26766444). Upon binding to LGR4-6 (LGR4, LGR5 or LGR6), LGR4-6 associate with phosphorylated LRP6 and frizzled receptors that are activated by extracellular Wnt receptors, triggering the canonical Wnt signaling pathway to increase expression of target genes. Also regulates the canonical Wnt/beta-catenin-dependent pathway and non-canonical Wnt signaling by acting as an inhibitor of ZNRF3, an important regulator of the Wnt signaling pathway. Acts as a ligand for frizzled FZD8 and LRP6. May negatively regulate the TGF-beta pathway (PubMed:16543246, PubMed:21693646). Acts as a key regulator of angiogenesis by controlling vascular stability and pruning: acts by activating the non-canonical Wnt signaling pathway in endothelial cells (PubMed:16543246, PubMed:21693646, PubMed:26766444). Can also amplify Wnt signaling pathway independently of LGR4-6 receptors, possibly by acting as a direct antagonistic ligand to RNF43 and ZNRF3 (By similarity).</text>
</comment>
<comment type="subunit">
    <text evidence="6 7">Interacts with the extracellular domain of FZD8 and LRP6 (PubMed:16543246). It however does not form a ternary complex with FZD8 and LRP6 (PubMed:16543246). Interacts with WNT1 (PubMed:16543246). Binds heparin. Interacts with LGR4, LGR5 and LGR6 (PubMed:21693646).</text>
</comment>
<comment type="subcellular location">
    <subcellularLocation>
        <location evidence="6">Secreted</location>
    </subcellularLocation>
</comment>
<comment type="tissue specificity">
    <text evidence="8">Highly expressed in endothelial cells (PubMed:26766444).</text>
</comment>
<comment type="developmental stage">
    <text evidence="5">Expressed from day 7.5 in the primitive streak. At day 9.5, it is expressed in various neural and mesodermal derivatives, mainly along dorsal neural tube, diencephalon, somites and tailbud mesoderm. Strongly expressed in limb buds, particularly in the morphogenetically active region such as the apical ectodermal ridge (AER).</text>
</comment>
<comment type="domain">
    <text evidence="6">The FU repeats are required for activation and stabilization of beta-catenin.</text>
</comment>
<comment type="disruption phenotype">
    <text evidence="8">Embryonic lethality due to vascular remodeling defects (PubMed:26766444). Conditional knockout in endothelial cells results in impaired developmental and tumor vascular remodeling. Mice show endothelial cell apoptosis and vascular pruning, leading to reduced microvessel density (PubMed:26766444).</text>
</comment>
<comment type="similarity">
    <text evidence="11">Belongs to the R-spondin family.</text>
</comment>
<comment type="sequence caution" evidence="11">
    <conflict type="frameshift">
        <sequence resource="EMBL-CDS" id="BAC36296"/>
    </conflict>
</comment>
<organism>
    <name type="scientific">Mus musculus</name>
    <name type="common">Mouse</name>
    <dbReference type="NCBI Taxonomy" id="10090"/>
    <lineage>
        <taxon>Eukaryota</taxon>
        <taxon>Metazoa</taxon>
        <taxon>Chordata</taxon>
        <taxon>Craniata</taxon>
        <taxon>Vertebrata</taxon>
        <taxon>Euteleostomi</taxon>
        <taxon>Mammalia</taxon>
        <taxon>Eutheria</taxon>
        <taxon>Euarchontoglires</taxon>
        <taxon>Glires</taxon>
        <taxon>Rodentia</taxon>
        <taxon>Myomorpha</taxon>
        <taxon>Muroidea</taxon>
        <taxon>Muridae</taxon>
        <taxon>Murinae</taxon>
        <taxon>Mus</taxon>
        <taxon>Mus</taxon>
    </lineage>
</organism>
<feature type="signal peptide" evidence="2">
    <location>
        <begin position="1"/>
        <end position="21"/>
    </location>
</feature>
<feature type="chain" id="PRO_0000234444" description="R-spondin-3">
    <location>
        <begin position="22"/>
        <end position="277"/>
    </location>
</feature>
<feature type="repeat" description="FU 1">
    <location>
        <begin position="35"/>
        <end position="86"/>
    </location>
</feature>
<feature type="repeat" description="FU 2">
    <location>
        <begin position="92"/>
        <end position="135"/>
    </location>
</feature>
<feature type="domain" description="TSP type-1" evidence="3">
    <location>
        <begin position="147"/>
        <end position="207"/>
    </location>
</feature>
<feature type="region of interest" description="Disordered" evidence="4">
    <location>
        <begin position="210"/>
        <end position="277"/>
    </location>
</feature>
<feature type="compositionally biased region" description="Basic residues" evidence="4">
    <location>
        <begin position="213"/>
        <end position="223"/>
    </location>
</feature>
<feature type="compositionally biased region" description="Low complexity" evidence="4">
    <location>
        <begin position="232"/>
        <end position="245"/>
    </location>
</feature>
<feature type="glycosylation site" description="N-linked (GlcNAc...) asparagine" evidence="2">
    <location>
        <position position="36"/>
    </location>
</feature>
<feature type="disulfide bond" evidence="3">
    <location>
        <begin position="41"/>
        <end position="48"/>
    </location>
</feature>
<feature type="disulfide bond" evidence="3">
    <location>
        <begin position="45"/>
        <end position="54"/>
    </location>
</feature>
<feature type="disulfide bond" evidence="3">
    <location>
        <begin position="57"/>
        <end position="76"/>
    </location>
</feature>
<feature type="disulfide bond" evidence="3">
    <location>
        <begin position="80"/>
        <end position="95"/>
    </location>
</feature>
<feature type="disulfide bond" evidence="3">
    <location>
        <begin position="98"/>
        <end position="105"/>
    </location>
</feature>
<feature type="disulfide bond" evidence="3">
    <location>
        <begin position="102"/>
        <end position="111"/>
    </location>
</feature>
<feature type="disulfide bond" evidence="3">
    <location>
        <begin position="114"/>
        <end position="125"/>
    </location>
</feature>
<feature type="disulfide bond" evidence="3">
    <location>
        <begin position="129"/>
        <end position="142"/>
    </location>
</feature>
<feature type="disulfide bond" evidence="3">
    <location>
        <begin position="148"/>
        <end position="190"/>
    </location>
</feature>
<feature type="disulfide bond" evidence="3">
    <location>
        <begin position="159"/>
        <end position="166"/>
    </location>
</feature>
<feature type="disulfide bond" evidence="3">
    <location>
        <begin position="199"/>
        <end position="206"/>
    </location>
</feature>
<feature type="sequence conflict" description="In Ref. 1; AAX57441 and 3; BAC36296." evidence="11" ref="1 3">
    <original>K</original>
    <variation>Q</variation>
    <location>
        <position position="108"/>
    </location>
</feature>
<feature type="sequence conflict" description="In Ref. 2; BAC41353." evidence="11" ref="2">
    <original>P</original>
    <variation>A</variation>
    <location>
        <position position="130"/>
    </location>
</feature>
<feature type="sequence conflict" description="In Ref. 3; BAB28811." evidence="11" ref="3">
    <original>R</original>
    <variation>G</variation>
    <location>
        <position position="170"/>
    </location>
</feature>
<name>RSPO3_MOUSE</name>
<gene>
    <name type="primary">Rspo3</name>
</gene>
<reference key="1">
    <citation type="journal article" date="2006" name="J. Biol. Chem.">
        <title>Mouse cristin/R-spondin family proteins are novel ligands for the Frizzled 8 and LRP6 receptors and activate beta-catenin-dependent gene expression.</title>
        <authorList>
            <person name="Nam J.-S."/>
            <person name="Turcotte T.J."/>
            <person name="Smith P.F."/>
            <person name="Choi S."/>
            <person name="Yoon J.K."/>
        </authorList>
    </citation>
    <scope>NUCLEOTIDE SEQUENCE [MRNA]</scope>
    <scope>FUNCTION</scope>
    <scope>SUBCELLULAR LOCATION</scope>
    <scope>HEPARIN-BINDING</scope>
    <scope>DOMAIN</scope>
    <scope>INTERACTION WITH FZD8; LRP6 AND WNT1</scope>
</reference>
<reference key="2">
    <citation type="submission" date="2001-02" db="EMBL/GenBank/DDBJ databases">
        <title>Nucleopondin, a novel nuclear protein with a thrombospondin type I repeat, is expressed in dynamic spatial and temporal patterns in zebrafish and mouse development.</title>
        <authorList>
            <person name="Mieda M."/>
            <person name="Hirate Y."/>
            <person name="Aoki M."/>
            <person name="Sasaki K."/>
            <person name="Okamoto H."/>
        </authorList>
    </citation>
    <scope>NUCLEOTIDE SEQUENCE [MRNA]</scope>
</reference>
<reference key="3">
    <citation type="journal article" date="2004" name="Genome Res.">
        <title>The status, quality, and expansion of the NIH full-length cDNA project: the Mammalian Gene Collection (MGC).</title>
        <authorList>
            <consortium name="The MGC Project Team"/>
        </authorList>
    </citation>
    <scope>NUCLEOTIDE SEQUENCE [LARGE SCALE MRNA]</scope>
    <source>
        <tissue>Brain</tissue>
        <tissue>Limb</tissue>
    </source>
</reference>
<reference key="4">
    <citation type="journal article" date="2005" name="Science">
        <title>The transcriptional landscape of the mammalian genome.</title>
        <authorList>
            <person name="Carninci P."/>
            <person name="Kasukawa T."/>
            <person name="Katayama S."/>
            <person name="Gough J."/>
            <person name="Frith M.C."/>
            <person name="Maeda N."/>
            <person name="Oyama R."/>
            <person name="Ravasi T."/>
            <person name="Lenhard B."/>
            <person name="Wells C."/>
            <person name="Kodzius R."/>
            <person name="Shimokawa K."/>
            <person name="Bajic V.B."/>
            <person name="Brenner S.E."/>
            <person name="Batalov S."/>
            <person name="Forrest A.R."/>
            <person name="Zavolan M."/>
            <person name="Davis M.J."/>
            <person name="Wilming L.G."/>
            <person name="Aidinis V."/>
            <person name="Allen J.E."/>
            <person name="Ambesi-Impiombato A."/>
            <person name="Apweiler R."/>
            <person name="Aturaliya R.N."/>
            <person name="Bailey T.L."/>
            <person name="Bansal M."/>
            <person name="Baxter L."/>
            <person name="Beisel K.W."/>
            <person name="Bersano T."/>
            <person name="Bono H."/>
            <person name="Chalk A.M."/>
            <person name="Chiu K.P."/>
            <person name="Choudhary V."/>
            <person name="Christoffels A."/>
            <person name="Clutterbuck D.R."/>
            <person name="Crowe M.L."/>
            <person name="Dalla E."/>
            <person name="Dalrymple B.P."/>
            <person name="de Bono B."/>
            <person name="Della Gatta G."/>
            <person name="di Bernardo D."/>
            <person name="Down T."/>
            <person name="Engstrom P."/>
            <person name="Fagiolini M."/>
            <person name="Faulkner G."/>
            <person name="Fletcher C.F."/>
            <person name="Fukushima T."/>
            <person name="Furuno M."/>
            <person name="Futaki S."/>
            <person name="Gariboldi M."/>
            <person name="Georgii-Hemming P."/>
            <person name="Gingeras T.R."/>
            <person name="Gojobori T."/>
            <person name="Green R.E."/>
            <person name="Gustincich S."/>
            <person name="Harbers M."/>
            <person name="Hayashi Y."/>
            <person name="Hensch T.K."/>
            <person name="Hirokawa N."/>
            <person name="Hill D."/>
            <person name="Huminiecki L."/>
            <person name="Iacono M."/>
            <person name="Ikeo K."/>
            <person name="Iwama A."/>
            <person name="Ishikawa T."/>
            <person name="Jakt M."/>
            <person name="Kanapin A."/>
            <person name="Katoh M."/>
            <person name="Kawasawa Y."/>
            <person name="Kelso J."/>
            <person name="Kitamura H."/>
            <person name="Kitano H."/>
            <person name="Kollias G."/>
            <person name="Krishnan S.P."/>
            <person name="Kruger A."/>
            <person name="Kummerfeld S.K."/>
            <person name="Kurochkin I.V."/>
            <person name="Lareau L.F."/>
            <person name="Lazarevic D."/>
            <person name="Lipovich L."/>
            <person name="Liu J."/>
            <person name="Liuni S."/>
            <person name="McWilliam S."/>
            <person name="Madan Babu M."/>
            <person name="Madera M."/>
            <person name="Marchionni L."/>
            <person name="Matsuda H."/>
            <person name="Matsuzawa S."/>
            <person name="Miki H."/>
            <person name="Mignone F."/>
            <person name="Miyake S."/>
            <person name="Morris K."/>
            <person name="Mottagui-Tabar S."/>
            <person name="Mulder N."/>
            <person name="Nakano N."/>
            <person name="Nakauchi H."/>
            <person name="Ng P."/>
            <person name="Nilsson R."/>
            <person name="Nishiguchi S."/>
            <person name="Nishikawa S."/>
            <person name="Nori F."/>
            <person name="Ohara O."/>
            <person name="Okazaki Y."/>
            <person name="Orlando V."/>
            <person name="Pang K.C."/>
            <person name="Pavan W.J."/>
            <person name="Pavesi G."/>
            <person name="Pesole G."/>
            <person name="Petrovsky N."/>
            <person name="Piazza S."/>
            <person name="Reed J."/>
            <person name="Reid J.F."/>
            <person name="Ring B.Z."/>
            <person name="Ringwald M."/>
            <person name="Rost B."/>
            <person name="Ruan Y."/>
            <person name="Salzberg S.L."/>
            <person name="Sandelin A."/>
            <person name="Schneider C."/>
            <person name="Schoenbach C."/>
            <person name="Sekiguchi K."/>
            <person name="Semple C.A."/>
            <person name="Seno S."/>
            <person name="Sessa L."/>
            <person name="Sheng Y."/>
            <person name="Shibata Y."/>
            <person name="Shimada H."/>
            <person name="Shimada K."/>
            <person name="Silva D."/>
            <person name="Sinclair B."/>
            <person name="Sperling S."/>
            <person name="Stupka E."/>
            <person name="Sugiura K."/>
            <person name="Sultana R."/>
            <person name="Takenaka Y."/>
            <person name="Taki K."/>
            <person name="Tammoja K."/>
            <person name="Tan S.L."/>
            <person name="Tang S."/>
            <person name="Taylor M.S."/>
            <person name="Tegner J."/>
            <person name="Teichmann S.A."/>
            <person name="Ueda H.R."/>
            <person name="van Nimwegen E."/>
            <person name="Verardo R."/>
            <person name="Wei C.L."/>
            <person name="Yagi K."/>
            <person name="Yamanishi H."/>
            <person name="Zabarovsky E."/>
            <person name="Zhu S."/>
            <person name="Zimmer A."/>
            <person name="Hide W."/>
            <person name="Bult C."/>
            <person name="Grimmond S.M."/>
            <person name="Teasdale R.D."/>
            <person name="Liu E.T."/>
            <person name="Brusic V."/>
            <person name="Quackenbush J."/>
            <person name="Wahlestedt C."/>
            <person name="Mattick J.S."/>
            <person name="Hume D.A."/>
            <person name="Kai C."/>
            <person name="Sasaki D."/>
            <person name="Tomaru Y."/>
            <person name="Fukuda S."/>
            <person name="Kanamori-Katayama M."/>
            <person name="Suzuki M."/>
            <person name="Aoki J."/>
            <person name="Arakawa T."/>
            <person name="Iida J."/>
            <person name="Imamura K."/>
            <person name="Itoh M."/>
            <person name="Kato T."/>
            <person name="Kawaji H."/>
            <person name="Kawagashira N."/>
            <person name="Kawashima T."/>
            <person name="Kojima M."/>
            <person name="Kondo S."/>
            <person name="Konno H."/>
            <person name="Nakano K."/>
            <person name="Ninomiya N."/>
            <person name="Nishio T."/>
            <person name="Okada M."/>
            <person name="Plessy C."/>
            <person name="Shibata K."/>
            <person name="Shiraki T."/>
            <person name="Suzuki S."/>
            <person name="Tagami M."/>
            <person name="Waki K."/>
            <person name="Watahiki A."/>
            <person name="Okamura-Oho Y."/>
            <person name="Suzuki H."/>
            <person name="Kawai J."/>
            <person name="Hayashizaki Y."/>
        </authorList>
    </citation>
    <scope>NUCLEOTIDE SEQUENCE [LARGE SCALE MRNA]</scope>
    <source>
        <strain>C57BL/6J</strain>
        <tissue>Skin</tissue>
    </source>
</reference>
<reference key="5">
    <citation type="journal article" date="2004" name="Dev. Cell">
        <title>R-Spondin2 is a secreted activator of Wnt/beta-catenin signaling and is required for Xenopus myogenesis.</title>
        <authorList>
            <person name="Kazanskaya O."/>
            <person name="Glinka A."/>
            <person name="del Barco Barrantes I."/>
            <person name="Stannek P."/>
            <person name="Niehrs C."/>
            <person name="Wu W."/>
        </authorList>
    </citation>
    <scope>DEVELOPMENTAL STAGE</scope>
</reference>
<reference key="6">
    <citation type="journal article" date="2011" name="Proc. Natl. Acad. Sci. U.S.A.">
        <title>R-spondins function as ligands of the orphan receptors LGR4 and LGR5 to regulate Wnt/beta-catenin signaling.</title>
        <authorList>
            <person name="Carmon K.S."/>
            <person name="Gong X."/>
            <person name="Lin Q."/>
            <person name="Thomas A."/>
            <person name="Liu Q."/>
        </authorList>
    </citation>
    <scope>FUNCTION</scope>
    <scope>INTERACTION WITH LGR4 AND LGR5</scope>
</reference>
<reference key="7">
    <citation type="journal article" date="2016" name="Dev. Cell">
        <title>Endothelial RSPO3 controls vascular stability and pruning through non-canonical WNT/Ca(2+)/NFAT signaling.</title>
        <authorList>
            <person name="Scholz B."/>
            <person name="Korn C."/>
            <person name="Wojtarowicz J."/>
            <person name="Mogler C."/>
            <person name="Augustin I."/>
            <person name="Boutros M."/>
            <person name="Niehrs C."/>
            <person name="Augustin H.G."/>
        </authorList>
    </citation>
    <scope>FUNCTION</scope>
    <scope>DISRUPTION PHENOTYPE</scope>
    <scope>TISSUE SPECIFICITY</scope>
</reference>
<dbReference type="EMBL" id="AY864332">
    <property type="protein sequence ID" value="AAX57441.1"/>
    <property type="molecule type" value="mRNA"/>
</dbReference>
<dbReference type="EMBL" id="AB055811">
    <property type="protein sequence ID" value="BAC41353.1"/>
    <property type="molecule type" value="mRNA"/>
</dbReference>
<dbReference type="EMBL" id="AK013366">
    <property type="protein sequence ID" value="BAB28811.1"/>
    <property type="molecule type" value="mRNA"/>
</dbReference>
<dbReference type="EMBL" id="AK076308">
    <property type="protein sequence ID" value="BAC36296.1"/>
    <property type="status" value="ALT_FRAME"/>
    <property type="molecule type" value="mRNA"/>
</dbReference>
<dbReference type="EMBL" id="BC103794">
    <property type="protein sequence ID" value="AAI03795.1"/>
    <property type="molecule type" value="mRNA"/>
</dbReference>
<dbReference type="EMBL" id="BC145929">
    <property type="protein sequence ID" value="AAI45930.1"/>
    <property type="molecule type" value="mRNA"/>
</dbReference>
<dbReference type="EMBL" id="BC145931">
    <property type="protein sequence ID" value="AAI45932.1"/>
    <property type="molecule type" value="mRNA"/>
</dbReference>
<dbReference type="CCDS" id="CCDS23761.1"/>
<dbReference type="RefSeq" id="NP_082627.3">
    <property type="nucleotide sequence ID" value="NM_028351.3"/>
</dbReference>
<dbReference type="SMR" id="Q2TJ95"/>
<dbReference type="FunCoup" id="Q2TJ95">
    <property type="interactions" value="481"/>
</dbReference>
<dbReference type="STRING" id="10090.ENSMUSP00000090287"/>
<dbReference type="GlyCosmos" id="Q2TJ95">
    <property type="glycosylation" value="1 site, No reported glycans"/>
</dbReference>
<dbReference type="GlyGen" id="Q2TJ95">
    <property type="glycosylation" value="1 site"/>
</dbReference>
<dbReference type="iPTMnet" id="Q2TJ95"/>
<dbReference type="PhosphoSitePlus" id="Q2TJ95"/>
<dbReference type="PaxDb" id="10090-ENSMUSP00000090287"/>
<dbReference type="ProteomicsDB" id="260938"/>
<dbReference type="Antibodypedia" id="32746">
    <property type="antibodies" value="301 antibodies from 33 providers"/>
</dbReference>
<dbReference type="DNASU" id="72780"/>
<dbReference type="Ensembl" id="ENSMUST00000092623.5">
    <property type="protein sequence ID" value="ENSMUSP00000090287.4"/>
    <property type="gene ID" value="ENSMUSG00000019880.11"/>
</dbReference>
<dbReference type="GeneID" id="72780"/>
<dbReference type="KEGG" id="mmu:72780"/>
<dbReference type="UCSC" id="uc007etb.2">
    <property type="organism name" value="mouse"/>
</dbReference>
<dbReference type="AGR" id="MGI:1920030"/>
<dbReference type="CTD" id="84870"/>
<dbReference type="MGI" id="MGI:1920030">
    <property type="gene designation" value="Rspo3"/>
</dbReference>
<dbReference type="VEuPathDB" id="HostDB:ENSMUSG00000019880"/>
<dbReference type="eggNOG" id="KOG3525">
    <property type="taxonomic scope" value="Eukaryota"/>
</dbReference>
<dbReference type="GeneTree" id="ENSGT00940000157815"/>
<dbReference type="HOGENOM" id="CLU_064219_0_0_1"/>
<dbReference type="InParanoid" id="Q2TJ95"/>
<dbReference type="OMA" id="CMTSCPL"/>
<dbReference type="OrthoDB" id="10257656at2759"/>
<dbReference type="PhylomeDB" id="Q2TJ95"/>
<dbReference type="TreeFam" id="TF331799"/>
<dbReference type="Reactome" id="R-MMU-4641263">
    <property type="pathway name" value="Regulation of FZD by ubiquitination"/>
</dbReference>
<dbReference type="BioGRID-ORCS" id="72780">
    <property type="hits" value="0 hits in 79 CRISPR screens"/>
</dbReference>
<dbReference type="ChiTaRS" id="Rspo3">
    <property type="organism name" value="mouse"/>
</dbReference>
<dbReference type="PRO" id="PR:Q2TJ95"/>
<dbReference type="Proteomes" id="UP000000589">
    <property type="component" value="Chromosome 10"/>
</dbReference>
<dbReference type="RNAct" id="Q2TJ95">
    <property type="molecule type" value="protein"/>
</dbReference>
<dbReference type="Bgee" id="ENSMUSG00000019880">
    <property type="expression patterns" value="Expressed in vas deferens and 244 other cell types or tissues"/>
</dbReference>
<dbReference type="ExpressionAtlas" id="Q2TJ95">
    <property type="expression patterns" value="baseline and differential"/>
</dbReference>
<dbReference type="GO" id="GO:0005576">
    <property type="term" value="C:extracellular region"/>
    <property type="evidence" value="ECO:0000314"/>
    <property type="project" value="MGI"/>
</dbReference>
<dbReference type="GO" id="GO:0005109">
    <property type="term" value="F:frizzled binding"/>
    <property type="evidence" value="ECO:0000353"/>
    <property type="project" value="MGI"/>
</dbReference>
<dbReference type="GO" id="GO:0008201">
    <property type="term" value="F:heparin binding"/>
    <property type="evidence" value="ECO:0000314"/>
    <property type="project" value="MGI"/>
</dbReference>
<dbReference type="GO" id="GO:0005102">
    <property type="term" value="F:signaling receptor binding"/>
    <property type="evidence" value="ECO:0000353"/>
    <property type="project" value="MGI"/>
</dbReference>
<dbReference type="GO" id="GO:0001525">
    <property type="term" value="P:angiogenesis"/>
    <property type="evidence" value="ECO:0000315"/>
    <property type="project" value="MGI"/>
</dbReference>
<dbReference type="GO" id="GO:0001974">
    <property type="term" value="P:blood vessel remodeling"/>
    <property type="evidence" value="ECO:0000315"/>
    <property type="project" value="UniProtKB"/>
</dbReference>
<dbReference type="GO" id="GO:0060670">
    <property type="term" value="P:branching involved in labyrinthine layer morphogenesis"/>
    <property type="evidence" value="ECO:0000315"/>
    <property type="project" value="MGI"/>
</dbReference>
<dbReference type="GO" id="GO:0060070">
    <property type="term" value="P:canonical Wnt signaling pathway"/>
    <property type="evidence" value="ECO:0000315"/>
    <property type="project" value="MGI"/>
</dbReference>
<dbReference type="GO" id="GO:0060173">
    <property type="term" value="P:limb development"/>
    <property type="evidence" value="ECO:0000250"/>
    <property type="project" value="UniProtKB"/>
</dbReference>
<dbReference type="GO" id="GO:0090263">
    <property type="term" value="P:positive regulation of canonical Wnt signaling pathway"/>
    <property type="evidence" value="ECO:0000314"/>
    <property type="project" value="MGI"/>
</dbReference>
<dbReference type="GO" id="GO:2000052">
    <property type="term" value="P:positive regulation of non-canonical Wnt signaling pathway"/>
    <property type="evidence" value="ECO:0000315"/>
    <property type="project" value="UniProtKB"/>
</dbReference>
<dbReference type="GO" id="GO:0002040">
    <property type="term" value="P:sprouting angiogenesis"/>
    <property type="evidence" value="ECO:0000315"/>
    <property type="project" value="UniProtKB"/>
</dbReference>
<dbReference type="CDD" id="cd00064">
    <property type="entry name" value="FU"/>
    <property type="match status" value="1"/>
</dbReference>
<dbReference type="FunFam" id="2.10.220.10:FF:000003">
    <property type="entry name" value="R-spondin 3"/>
    <property type="match status" value="1"/>
</dbReference>
<dbReference type="FunFam" id="2.20.100.10:FF:000043">
    <property type="entry name" value="R-spondin 3"/>
    <property type="match status" value="1"/>
</dbReference>
<dbReference type="Gene3D" id="2.10.220.10">
    <property type="entry name" value="Hormone Receptor, Insulin-like Growth Factor Receptor 1, Chain A, domain 2"/>
    <property type="match status" value="1"/>
</dbReference>
<dbReference type="Gene3D" id="2.20.100.10">
    <property type="entry name" value="Thrombospondin type-1 (TSP1) repeat"/>
    <property type="match status" value="1"/>
</dbReference>
<dbReference type="InterPro" id="IPR006212">
    <property type="entry name" value="Furin_repeat"/>
</dbReference>
<dbReference type="InterPro" id="IPR009030">
    <property type="entry name" value="Growth_fac_rcpt_cys_sf"/>
</dbReference>
<dbReference type="InterPro" id="IPR051514">
    <property type="entry name" value="R-spondin"/>
</dbReference>
<dbReference type="InterPro" id="IPR043601">
    <property type="entry name" value="Rspo_Fu-CRD_dom"/>
</dbReference>
<dbReference type="InterPro" id="IPR000884">
    <property type="entry name" value="TSP1_rpt"/>
</dbReference>
<dbReference type="InterPro" id="IPR036383">
    <property type="entry name" value="TSP1_rpt_sf"/>
</dbReference>
<dbReference type="InterPro" id="IPR044004">
    <property type="entry name" value="TSP1_spondin_dom"/>
</dbReference>
<dbReference type="PANTHER" id="PTHR46987">
    <property type="entry name" value="NEUROHYPOPHYSIAL HORMONES, N-TERMINAL DOMAIN CONTAINING PROTEIN"/>
    <property type="match status" value="1"/>
</dbReference>
<dbReference type="PANTHER" id="PTHR46987:SF1">
    <property type="entry name" value="R-SPONDIN-3"/>
    <property type="match status" value="1"/>
</dbReference>
<dbReference type="Pfam" id="PF15913">
    <property type="entry name" value="Furin-like_2"/>
    <property type="match status" value="1"/>
</dbReference>
<dbReference type="Pfam" id="PF19028">
    <property type="entry name" value="TSP1_spondin"/>
    <property type="match status" value="1"/>
</dbReference>
<dbReference type="SMART" id="SM00261">
    <property type="entry name" value="FU"/>
    <property type="match status" value="2"/>
</dbReference>
<dbReference type="SMART" id="SM00209">
    <property type="entry name" value="TSP1"/>
    <property type="match status" value="1"/>
</dbReference>
<dbReference type="SUPFAM" id="SSF57184">
    <property type="entry name" value="Growth factor receptor domain"/>
    <property type="match status" value="1"/>
</dbReference>
<dbReference type="SUPFAM" id="SSF82895">
    <property type="entry name" value="TSP-1 type 1 repeat"/>
    <property type="match status" value="1"/>
</dbReference>
<dbReference type="PROSITE" id="PS50092">
    <property type="entry name" value="TSP1"/>
    <property type="match status" value="1"/>
</dbReference>
<sequence>MHLRLISCFFIILNFMEYIGSQNASRGRRQRRMHPNVSQGCQGGCATCSDYNGCLSCKPRLFFVLERIGMKQIGVCLSSCPSGYYGTRYPDINKCTKCKVDCDTCFNKNFCTKCKSGFYLHLGKCLDSCPEGLEANNHTMECVSIVHCEASEWSPWSPCMKKGKTCGFKRGTETRVRDILQHPSAKGNLCPPTSETRTCIVQRKKCSKGERGKKGRERKRKKLNKEERKETSSSSDSKGLESSIETPDQQENKERQQQQKRRARDKQQKSVSVSTVH</sequence>
<proteinExistence type="evidence at protein level"/>